<name>C71C1_CITSI</name>
<accession>A0A067ELB0</accession>
<dbReference type="EC" id="1.14.14.-" evidence="3"/>
<dbReference type="EMBL" id="OQ091239">
    <property type="protein sequence ID" value="WCJ12484.1"/>
    <property type="molecule type" value="mRNA"/>
</dbReference>
<dbReference type="EMBL" id="KK785050">
    <property type="protein sequence ID" value="KDO51686.1"/>
    <property type="molecule type" value="Genomic_DNA"/>
</dbReference>
<dbReference type="SMR" id="A0A067ELB0"/>
<dbReference type="STRING" id="2711.A0A067ELB0"/>
<dbReference type="PaxDb" id="2711-XP_006465005-1"/>
<dbReference type="eggNOG" id="KOG0157">
    <property type="taxonomic scope" value="Eukaryota"/>
</dbReference>
<dbReference type="UniPathway" id="UPA00213"/>
<dbReference type="Proteomes" id="UP000027120">
    <property type="component" value="Unassembled WGS sequence"/>
</dbReference>
<dbReference type="GO" id="GO:0016020">
    <property type="term" value="C:membrane"/>
    <property type="evidence" value="ECO:0007669"/>
    <property type="project" value="UniProtKB-SubCell"/>
</dbReference>
<dbReference type="GO" id="GO:0020037">
    <property type="term" value="F:heme binding"/>
    <property type="evidence" value="ECO:0007669"/>
    <property type="project" value="InterPro"/>
</dbReference>
<dbReference type="GO" id="GO:0005506">
    <property type="term" value="F:iron ion binding"/>
    <property type="evidence" value="ECO:0007669"/>
    <property type="project" value="InterPro"/>
</dbReference>
<dbReference type="GO" id="GO:0004497">
    <property type="term" value="F:monooxygenase activity"/>
    <property type="evidence" value="ECO:0000318"/>
    <property type="project" value="GO_Central"/>
</dbReference>
<dbReference type="GO" id="GO:0016705">
    <property type="term" value="F:oxidoreductase activity, acting on paired donors, with incorporation or reduction of molecular oxygen"/>
    <property type="evidence" value="ECO:0007669"/>
    <property type="project" value="InterPro"/>
</dbReference>
<dbReference type="GO" id="GO:0016135">
    <property type="term" value="P:saponin biosynthetic process"/>
    <property type="evidence" value="ECO:0000318"/>
    <property type="project" value="GO_Central"/>
</dbReference>
<dbReference type="CDD" id="cd11043">
    <property type="entry name" value="CYP90-like"/>
    <property type="match status" value="1"/>
</dbReference>
<dbReference type="FunFam" id="1.10.630.10:FF:000022">
    <property type="entry name" value="Taxadiene 5-alpha hydroxylase"/>
    <property type="match status" value="1"/>
</dbReference>
<dbReference type="Gene3D" id="1.10.630.10">
    <property type="entry name" value="Cytochrome P450"/>
    <property type="match status" value="1"/>
</dbReference>
<dbReference type="InterPro" id="IPR001128">
    <property type="entry name" value="Cyt_P450"/>
</dbReference>
<dbReference type="InterPro" id="IPR017972">
    <property type="entry name" value="Cyt_P450_CS"/>
</dbReference>
<dbReference type="InterPro" id="IPR002401">
    <property type="entry name" value="Cyt_P450_E_grp-I"/>
</dbReference>
<dbReference type="InterPro" id="IPR036396">
    <property type="entry name" value="Cyt_P450_sf"/>
</dbReference>
<dbReference type="PANTHER" id="PTHR24286:SF381">
    <property type="entry name" value="BETA-AMYRIN 28-OXIDASE"/>
    <property type="match status" value="1"/>
</dbReference>
<dbReference type="PANTHER" id="PTHR24286">
    <property type="entry name" value="CYTOCHROME P450 26"/>
    <property type="match status" value="1"/>
</dbReference>
<dbReference type="Pfam" id="PF00067">
    <property type="entry name" value="p450"/>
    <property type="match status" value="1"/>
</dbReference>
<dbReference type="PRINTS" id="PR00463">
    <property type="entry name" value="EP450I"/>
</dbReference>
<dbReference type="SUPFAM" id="SSF48264">
    <property type="entry name" value="Cytochrome P450"/>
    <property type="match status" value="1"/>
</dbReference>
<dbReference type="PROSITE" id="PS00086">
    <property type="entry name" value="CYTOCHROME_P450"/>
    <property type="match status" value="1"/>
</dbReference>
<reference key="1">
    <citation type="journal article" date="2023" name="Science">
        <title>Complex scaffold remodeling in plant triterpene biosynthesis.</title>
        <authorList>
            <person name="De La Pena R."/>
            <person name="Hodgson H."/>
            <person name="Liu J.C."/>
            <person name="Stephenson M.J."/>
            <person name="Martin A.C."/>
            <person name="Owen C."/>
            <person name="Harkess A."/>
            <person name="Leebens-Mack J."/>
            <person name="Jimenez L.E."/>
            <person name="Osbourn A."/>
            <person name="Sattely E.S."/>
        </authorList>
    </citation>
    <scope>NUCLEOTIDE SEQUENCE [MRNA]</scope>
    <scope>FUNCTION</scope>
    <scope>CATALYTIC ACTIVITY</scope>
    <scope>PATHWAY</scope>
    <scope>TISSUE SPECIFICITY</scope>
    <source>
        <strain>cv. Valencia</strain>
    </source>
</reference>
<reference key="2">
    <citation type="submission" date="2014-04" db="EMBL/GenBank/DDBJ databases">
        <authorList>
            <consortium name="International Citrus Genome Consortium"/>
            <person name="Gmitter F."/>
            <person name="Chen C."/>
            <person name="Farmerie W."/>
            <person name="Harkins T."/>
            <person name="Desany B."/>
            <person name="Mohiuddin M."/>
            <person name="Kodira C."/>
            <person name="Borodovsky M."/>
            <person name="Lomsadze A."/>
            <person name="Burns P."/>
            <person name="Jenkins J."/>
            <person name="Prochnik S."/>
            <person name="Shu S."/>
            <person name="Chapman J."/>
            <person name="Pitluck S."/>
            <person name="Schmutz J."/>
            <person name="Rokhsar D."/>
        </authorList>
    </citation>
    <scope>NUCLEOTIDE SEQUENCE [LARGE SCALE GENOMIC DNA]</scope>
    <source>
        <strain>cv. Ridge Pineapple sweet orange</strain>
    </source>
</reference>
<gene>
    <name evidence="4" type="primary">CYP716AC1</name>
    <name evidence="7" type="ORF">CISIN_1g011873mg</name>
</gene>
<sequence>MEFIILSLLLLSLALYSLYYVIIKPKPTTQNLPPGRKGWPFIGETLEYHALSKKGCIEKFMSQRMQKYSSKIFKTSYLGADMVFLCSAEGNKLLFSNEHKLFKPWLPRIIENSFKSSPNITLQDEFNSLRRVIGSFTEPNALRRYVGMMDANAKRHLRKYWDGNDVVKVHDLSRKFIFALCSELMYNIHDTRTADELENLAHCIMTEFFIIPVNIPGTKFGRAVRAGREFHQRFRNMIKQRRLEIEEKREPEHKDILSLLLLEKNKDGEDLTESEIALKMQAVLIGAYDNPSIAISTIIKFLAELPEIYEQVLREQMEIANSKGPDELLSFDDLKRMKYTWNVISEVLRMEPPNSGTFREALTEVTIDGYTIPKGFKLHWAVNATHKDPECFPNPEKFDPSRYQGNDIVPFSYVPFGAGPHICPGKEFARLKLLVFFHNLVRKFRWEKIIPDEKMIRNPNLMPEKGLPVRLYPNN</sequence>
<feature type="chain" id="PRO_0000461371" description="Luvungin A synthase CYP716AC1">
    <location>
        <begin position="1"/>
        <end position="475"/>
    </location>
</feature>
<feature type="transmembrane region" description="Helical" evidence="2">
    <location>
        <begin position="3"/>
        <end position="23"/>
    </location>
</feature>
<feature type="binding site" description="axial binding residue" evidence="1">
    <location>
        <position position="423"/>
    </location>
    <ligand>
        <name>heme</name>
        <dbReference type="ChEBI" id="CHEBI:30413"/>
    </ligand>
    <ligandPart>
        <name>Fe</name>
        <dbReference type="ChEBI" id="CHEBI:18248"/>
    </ligandPart>
</feature>
<feature type="sequence conflict" description="In Ref. 1; WCJ12484." evidence="5" ref="1">
    <original>V</original>
    <variation>A</variation>
    <location>
        <position position="166"/>
    </location>
</feature>
<feature type="sequence conflict" description="In Ref. 1; WCJ12484." evidence="5" ref="1">
    <original>S</original>
    <variation>C</variation>
    <location>
        <position position="182"/>
    </location>
</feature>
<feature type="sequence conflict" description="In Ref. 1; WCJ12484." evidence="5" ref="1">
    <original>T</original>
    <variation>K</variation>
    <location>
        <position position="371"/>
    </location>
</feature>
<comment type="function">
    <text evidence="3">Monooxygenase involved in the biosynthesis of limonoids triterpene natural products such as limonin, a compound with insecticidal activity responsible for the bitter taste in citrus (PubMed:36701471). Catalyzes the conversion of (21S)-21-acetoxyl-apo-melianone to luvungin A (PubMed:36701471).</text>
</comment>
<comment type="catalytic activity">
    <reaction evidence="3">
        <text>(21S)-21-acetoxyl-apo-melianone + reduced [NADPH--hemoprotein reductase] + O2 = luvungin A + oxidized [NADPH--hemoprotein reductase] + H2O + H(+)</text>
        <dbReference type="Rhea" id="RHEA:80311"/>
        <dbReference type="Rhea" id="RHEA-COMP:11964"/>
        <dbReference type="Rhea" id="RHEA-COMP:11965"/>
        <dbReference type="ChEBI" id="CHEBI:15377"/>
        <dbReference type="ChEBI" id="CHEBI:15378"/>
        <dbReference type="ChEBI" id="CHEBI:15379"/>
        <dbReference type="ChEBI" id="CHEBI:57618"/>
        <dbReference type="ChEBI" id="CHEBI:58210"/>
        <dbReference type="ChEBI" id="CHEBI:231456"/>
        <dbReference type="ChEBI" id="CHEBI:231475"/>
    </reaction>
    <physiologicalReaction direction="left-to-right" evidence="3">
        <dbReference type="Rhea" id="RHEA:80312"/>
    </physiologicalReaction>
</comment>
<comment type="cofactor">
    <cofactor evidence="1">
        <name>heme</name>
        <dbReference type="ChEBI" id="CHEBI:30413"/>
    </cofactor>
</comment>
<comment type="pathway">
    <text evidence="3">Secondary metabolite biosynthesis; terpenoid biosynthesis.</text>
</comment>
<comment type="subcellular location">
    <subcellularLocation>
        <location evidence="2">Membrane</location>
        <topology evidence="2">Single-pass membrane protein</topology>
    </subcellularLocation>
</comment>
<comment type="tissue specificity">
    <text evidence="3">Expressed in flowers, maturing fruits and in juice vesicles.</text>
</comment>
<comment type="similarity">
    <text evidence="5">Belongs to the cytochrome P450 family.</text>
</comment>
<organism>
    <name type="scientific">Citrus sinensis</name>
    <name type="common">Sweet orange</name>
    <name type="synonym">Citrus aurantium var. sinensis</name>
    <dbReference type="NCBI Taxonomy" id="2711"/>
    <lineage>
        <taxon>Eukaryota</taxon>
        <taxon>Viridiplantae</taxon>
        <taxon>Streptophyta</taxon>
        <taxon>Embryophyta</taxon>
        <taxon>Tracheophyta</taxon>
        <taxon>Spermatophyta</taxon>
        <taxon>Magnoliopsida</taxon>
        <taxon>eudicotyledons</taxon>
        <taxon>Gunneridae</taxon>
        <taxon>Pentapetalae</taxon>
        <taxon>rosids</taxon>
        <taxon>malvids</taxon>
        <taxon>Sapindales</taxon>
        <taxon>Rutaceae</taxon>
        <taxon>Aurantioideae</taxon>
        <taxon>Citrus</taxon>
    </lineage>
</organism>
<evidence type="ECO:0000250" key="1">
    <source>
        <dbReference type="UniProtKB" id="Q96242"/>
    </source>
</evidence>
<evidence type="ECO:0000255" key="2"/>
<evidence type="ECO:0000269" key="3">
    <source>
    </source>
</evidence>
<evidence type="ECO:0000303" key="4">
    <source>
    </source>
</evidence>
<evidence type="ECO:0000305" key="5"/>
<evidence type="ECO:0000305" key="6">
    <source>
    </source>
</evidence>
<evidence type="ECO:0000312" key="7">
    <source>
        <dbReference type="EMBL" id="KDO51686.1"/>
    </source>
</evidence>
<keyword id="KW-0349">Heme</keyword>
<keyword id="KW-0408">Iron</keyword>
<keyword id="KW-0472">Membrane</keyword>
<keyword id="KW-0479">Metal-binding</keyword>
<keyword id="KW-0503">Monooxygenase</keyword>
<keyword id="KW-0560">Oxidoreductase</keyword>
<keyword id="KW-1185">Reference proteome</keyword>
<keyword id="KW-0812">Transmembrane</keyword>
<keyword id="KW-1133">Transmembrane helix</keyword>
<proteinExistence type="evidence at protein level"/>
<protein>
    <recommendedName>
        <fullName evidence="6">Luvungin A synthase CYP716AC1</fullName>
        <ecNumber evidence="3">1.14.14.-</ecNumber>
    </recommendedName>
    <alternativeName>
        <fullName evidence="4">Cytochrome P450 family 716 subfamily AC polypeptide 1</fullName>
        <shortName evidence="4">CsCYP716AC1</shortName>
    </alternativeName>
</protein>